<evidence type="ECO:0000250" key="1"/>
<evidence type="ECO:0000269" key="2">
    <source>
    </source>
</evidence>
<evidence type="ECO:0000305" key="3"/>
<reference key="1">
    <citation type="journal article" date="2002" name="Nature">
        <title>The genome sequence of Schizosaccharomyces pombe.</title>
        <authorList>
            <person name="Wood V."/>
            <person name="Gwilliam R."/>
            <person name="Rajandream M.A."/>
            <person name="Lyne M.H."/>
            <person name="Lyne R."/>
            <person name="Stewart A."/>
            <person name="Sgouros J.G."/>
            <person name="Peat N."/>
            <person name="Hayles J."/>
            <person name="Baker S.G."/>
            <person name="Basham D."/>
            <person name="Bowman S."/>
            <person name="Brooks K."/>
            <person name="Brown D."/>
            <person name="Brown S."/>
            <person name="Chillingworth T."/>
            <person name="Churcher C.M."/>
            <person name="Collins M."/>
            <person name="Connor R."/>
            <person name="Cronin A."/>
            <person name="Davis P."/>
            <person name="Feltwell T."/>
            <person name="Fraser A."/>
            <person name="Gentles S."/>
            <person name="Goble A."/>
            <person name="Hamlin N."/>
            <person name="Harris D.E."/>
            <person name="Hidalgo J."/>
            <person name="Hodgson G."/>
            <person name="Holroyd S."/>
            <person name="Hornsby T."/>
            <person name="Howarth S."/>
            <person name="Huckle E.J."/>
            <person name="Hunt S."/>
            <person name="Jagels K."/>
            <person name="James K.D."/>
            <person name="Jones L."/>
            <person name="Jones M."/>
            <person name="Leather S."/>
            <person name="McDonald S."/>
            <person name="McLean J."/>
            <person name="Mooney P."/>
            <person name="Moule S."/>
            <person name="Mungall K.L."/>
            <person name="Murphy L.D."/>
            <person name="Niblett D."/>
            <person name="Odell C."/>
            <person name="Oliver K."/>
            <person name="O'Neil S."/>
            <person name="Pearson D."/>
            <person name="Quail M.A."/>
            <person name="Rabbinowitsch E."/>
            <person name="Rutherford K.M."/>
            <person name="Rutter S."/>
            <person name="Saunders D."/>
            <person name="Seeger K."/>
            <person name="Sharp S."/>
            <person name="Skelton J."/>
            <person name="Simmonds M.N."/>
            <person name="Squares R."/>
            <person name="Squares S."/>
            <person name="Stevens K."/>
            <person name="Taylor K."/>
            <person name="Taylor R.G."/>
            <person name="Tivey A."/>
            <person name="Walsh S.V."/>
            <person name="Warren T."/>
            <person name="Whitehead S."/>
            <person name="Woodward J.R."/>
            <person name="Volckaert G."/>
            <person name="Aert R."/>
            <person name="Robben J."/>
            <person name="Grymonprez B."/>
            <person name="Weltjens I."/>
            <person name="Vanstreels E."/>
            <person name="Rieger M."/>
            <person name="Schaefer M."/>
            <person name="Mueller-Auer S."/>
            <person name="Gabel C."/>
            <person name="Fuchs M."/>
            <person name="Duesterhoeft A."/>
            <person name="Fritzc C."/>
            <person name="Holzer E."/>
            <person name="Moestl D."/>
            <person name="Hilbert H."/>
            <person name="Borzym K."/>
            <person name="Langer I."/>
            <person name="Beck A."/>
            <person name="Lehrach H."/>
            <person name="Reinhardt R."/>
            <person name="Pohl T.M."/>
            <person name="Eger P."/>
            <person name="Zimmermann W."/>
            <person name="Wedler H."/>
            <person name="Wambutt R."/>
            <person name="Purnelle B."/>
            <person name="Goffeau A."/>
            <person name="Cadieu E."/>
            <person name="Dreano S."/>
            <person name="Gloux S."/>
            <person name="Lelaure V."/>
            <person name="Mottier S."/>
            <person name="Galibert F."/>
            <person name="Aves S.J."/>
            <person name="Xiang Z."/>
            <person name="Hunt C."/>
            <person name="Moore K."/>
            <person name="Hurst S.M."/>
            <person name="Lucas M."/>
            <person name="Rochet M."/>
            <person name="Gaillardin C."/>
            <person name="Tallada V.A."/>
            <person name="Garzon A."/>
            <person name="Thode G."/>
            <person name="Daga R.R."/>
            <person name="Cruzado L."/>
            <person name="Jimenez J."/>
            <person name="Sanchez M."/>
            <person name="del Rey F."/>
            <person name="Benito J."/>
            <person name="Dominguez A."/>
            <person name="Revuelta J.L."/>
            <person name="Moreno S."/>
            <person name="Armstrong J."/>
            <person name="Forsburg S.L."/>
            <person name="Cerutti L."/>
            <person name="Lowe T."/>
            <person name="McCombie W.R."/>
            <person name="Paulsen I."/>
            <person name="Potashkin J."/>
            <person name="Shpakovski G.V."/>
            <person name="Ussery D."/>
            <person name="Barrell B.G."/>
            <person name="Nurse P."/>
        </authorList>
    </citation>
    <scope>NUCLEOTIDE SEQUENCE [LARGE SCALE GENOMIC DNA]</scope>
    <source>
        <strain>972 / ATCC 24843</strain>
    </source>
</reference>
<reference key="2">
    <citation type="journal article" date="2006" name="Nat. Biotechnol.">
        <title>ORFeome cloning and global analysis of protein localization in the fission yeast Schizosaccharomyces pombe.</title>
        <authorList>
            <person name="Matsuyama A."/>
            <person name="Arai R."/>
            <person name="Yashiroda Y."/>
            <person name="Shirai A."/>
            <person name="Kamata A."/>
            <person name="Sekido S."/>
            <person name="Kobayashi Y."/>
            <person name="Hashimoto A."/>
            <person name="Hamamoto M."/>
            <person name="Hiraoka Y."/>
            <person name="Horinouchi S."/>
            <person name="Yoshida M."/>
        </authorList>
    </citation>
    <scope>SUBCELLULAR LOCATION [LARGE SCALE ANALYSIS]</scope>
</reference>
<dbReference type="EMBL" id="CU329671">
    <property type="protein sequence ID" value="CAB59806.1"/>
    <property type="molecule type" value="Genomic_DNA"/>
</dbReference>
<dbReference type="PIR" id="T39331">
    <property type="entry name" value="T39331"/>
</dbReference>
<dbReference type="RefSeq" id="NP_595722.1">
    <property type="nucleotide sequence ID" value="NM_001021620.2"/>
</dbReference>
<dbReference type="SMR" id="Q9USZ5"/>
<dbReference type="BioGRID" id="276382">
    <property type="interactions" value="2"/>
</dbReference>
<dbReference type="FunCoup" id="Q9USZ5">
    <property type="interactions" value="159"/>
</dbReference>
<dbReference type="STRING" id="284812.Q9USZ5"/>
<dbReference type="PaxDb" id="4896-SPBC11G11.04.1"/>
<dbReference type="EnsemblFungi" id="SPBC11G11.04.1">
    <property type="protein sequence ID" value="SPBC11G11.04.1:pep"/>
    <property type="gene ID" value="SPBC11G11.04"/>
</dbReference>
<dbReference type="GeneID" id="2539833"/>
<dbReference type="KEGG" id="spo:2539833"/>
<dbReference type="PomBase" id="SPBC11G11.04">
    <property type="gene designation" value="trs20"/>
</dbReference>
<dbReference type="VEuPathDB" id="FungiDB:SPBC11G11.04"/>
<dbReference type="eggNOG" id="KOG3487">
    <property type="taxonomic scope" value="Eukaryota"/>
</dbReference>
<dbReference type="HOGENOM" id="CLU_085828_0_2_1"/>
<dbReference type="InParanoid" id="Q9USZ5"/>
<dbReference type="OMA" id="FFQELHE"/>
<dbReference type="PhylomeDB" id="Q9USZ5"/>
<dbReference type="Reactome" id="R-SPO-204005">
    <property type="pathway name" value="COPII-mediated vesicle transport"/>
</dbReference>
<dbReference type="Reactome" id="R-SPO-8876198">
    <property type="pathway name" value="RAB GEFs exchange GTP for GDP on RABs"/>
</dbReference>
<dbReference type="PRO" id="PR:Q9USZ5"/>
<dbReference type="Proteomes" id="UP000002485">
    <property type="component" value="Chromosome II"/>
</dbReference>
<dbReference type="GO" id="GO:0005801">
    <property type="term" value="C:cis-Golgi network"/>
    <property type="evidence" value="ECO:0000305"/>
    <property type="project" value="PomBase"/>
</dbReference>
<dbReference type="GO" id="GO:0005737">
    <property type="term" value="C:cytoplasm"/>
    <property type="evidence" value="ECO:0000318"/>
    <property type="project" value="GO_Central"/>
</dbReference>
<dbReference type="GO" id="GO:0005783">
    <property type="term" value="C:endoplasmic reticulum"/>
    <property type="evidence" value="ECO:0007669"/>
    <property type="project" value="UniProtKB-SubCell"/>
</dbReference>
<dbReference type="GO" id="GO:0005634">
    <property type="term" value="C:nucleus"/>
    <property type="evidence" value="ECO:0000318"/>
    <property type="project" value="GO_Central"/>
</dbReference>
<dbReference type="GO" id="GO:0030008">
    <property type="term" value="C:TRAPP complex"/>
    <property type="evidence" value="ECO:0000318"/>
    <property type="project" value="GO_Central"/>
</dbReference>
<dbReference type="GO" id="GO:1990070">
    <property type="term" value="C:TRAPPI protein complex"/>
    <property type="evidence" value="ECO:0000266"/>
    <property type="project" value="PomBase"/>
</dbReference>
<dbReference type="GO" id="GO:1990071">
    <property type="term" value="C:TRAPPII protein complex"/>
    <property type="evidence" value="ECO:0000266"/>
    <property type="project" value="PomBase"/>
</dbReference>
<dbReference type="GO" id="GO:1990072">
    <property type="term" value="C:TRAPPIII protein complex"/>
    <property type="evidence" value="ECO:0000266"/>
    <property type="project" value="PomBase"/>
</dbReference>
<dbReference type="GO" id="GO:0006888">
    <property type="term" value="P:endoplasmic reticulum to Golgi vesicle-mediated transport"/>
    <property type="evidence" value="ECO:0000318"/>
    <property type="project" value="GO_Central"/>
</dbReference>
<dbReference type="GO" id="GO:0006891">
    <property type="term" value="P:intra-Golgi vesicle-mediated transport"/>
    <property type="evidence" value="ECO:0000305"/>
    <property type="project" value="PomBase"/>
</dbReference>
<dbReference type="GO" id="GO:0006886">
    <property type="term" value="P:intracellular protein transport"/>
    <property type="evidence" value="ECO:0000305"/>
    <property type="project" value="PomBase"/>
</dbReference>
<dbReference type="GO" id="GO:0016236">
    <property type="term" value="P:macroautophagy"/>
    <property type="evidence" value="ECO:0000305"/>
    <property type="project" value="PomBase"/>
</dbReference>
<dbReference type="CDD" id="cd14825">
    <property type="entry name" value="TRAPPC2_sedlin"/>
    <property type="match status" value="1"/>
</dbReference>
<dbReference type="FunFam" id="3.30.450.70:FF:000001">
    <property type="entry name" value="Trafficking protein particle complex subunit 2"/>
    <property type="match status" value="1"/>
</dbReference>
<dbReference type="Gene3D" id="3.30.450.70">
    <property type="match status" value="1"/>
</dbReference>
<dbReference type="InterPro" id="IPR011012">
    <property type="entry name" value="Longin-like_dom_sf"/>
</dbReference>
<dbReference type="InterPro" id="IPR006722">
    <property type="entry name" value="Sedlin"/>
</dbReference>
<dbReference type="InterPro" id="IPR007233">
    <property type="entry name" value="TRAPPC"/>
</dbReference>
<dbReference type="PANTHER" id="PTHR12403">
    <property type="entry name" value="TRAFFICKING PROTEIN PARTICLE COMPLEX SUBUNIT 2"/>
    <property type="match status" value="1"/>
</dbReference>
<dbReference type="Pfam" id="PF04628">
    <property type="entry name" value="Sedlin_N"/>
    <property type="match status" value="1"/>
</dbReference>
<dbReference type="SMART" id="SM01399">
    <property type="entry name" value="Sybindin"/>
    <property type="match status" value="1"/>
</dbReference>
<dbReference type="SUPFAM" id="SSF64356">
    <property type="entry name" value="SNARE-like"/>
    <property type="match status" value="1"/>
</dbReference>
<accession>Q9USZ5</accession>
<sequence length="136" mass="16040">MTAYAAIIGTKDNPVYELEMGPINEKLDRSLNSHLNQFIVHSSLDIVDQLQWTSNAFYMKTIDQFHEMYISAYVTPSNMRFMLLHQNQSADNIKLFFQELHELYIKTLMSPFYQPNQPIRSQAFDLKVRSIARRYL</sequence>
<proteinExistence type="inferred from homology"/>
<keyword id="KW-0963">Cytoplasm</keyword>
<keyword id="KW-0256">Endoplasmic reticulum</keyword>
<keyword id="KW-0931">ER-Golgi transport</keyword>
<keyword id="KW-0333">Golgi apparatus</keyword>
<keyword id="KW-1185">Reference proteome</keyword>
<keyword id="KW-0813">Transport</keyword>
<protein>
    <recommendedName>
        <fullName>Transport protein particle 20 kDa subunit</fullName>
        <shortName>TRAPP 20 kDa subunit</shortName>
    </recommendedName>
</protein>
<name>TRS20_SCHPO</name>
<gene>
    <name type="primary">trs20</name>
    <name type="ORF">SPBC11G11.04</name>
</gene>
<organism>
    <name type="scientific">Schizosaccharomyces pombe (strain 972 / ATCC 24843)</name>
    <name type="common">Fission yeast</name>
    <dbReference type="NCBI Taxonomy" id="284812"/>
    <lineage>
        <taxon>Eukaryota</taxon>
        <taxon>Fungi</taxon>
        <taxon>Dikarya</taxon>
        <taxon>Ascomycota</taxon>
        <taxon>Taphrinomycotina</taxon>
        <taxon>Schizosaccharomycetes</taxon>
        <taxon>Schizosaccharomycetales</taxon>
        <taxon>Schizosaccharomycetaceae</taxon>
        <taxon>Schizosaccharomyces</taxon>
    </lineage>
</organism>
<comment type="function">
    <text evidence="1">Component of the TRAPP I and TRAPP II complexes. TRAPP I plays a key role in the late stages of endoplasmic reticulum to Golgi traffic. TRAPP II seems to play a role in intra-Golgi transport (By similarity).</text>
</comment>
<comment type="subcellular location">
    <subcellularLocation>
        <location evidence="2">Cytoplasm</location>
    </subcellularLocation>
    <subcellularLocation>
        <location evidence="1">Golgi apparatus</location>
        <location evidence="1">cis-Golgi network</location>
    </subcellularLocation>
    <subcellularLocation>
        <location evidence="1">Endoplasmic reticulum</location>
    </subcellularLocation>
</comment>
<comment type="similarity">
    <text evidence="3">Belongs to the TRAPP small subunits family. Sedlin subfamily.</text>
</comment>
<feature type="chain" id="PRO_0000372419" description="Transport protein particle 20 kDa subunit">
    <location>
        <begin position="1"/>
        <end position="136"/>
    </location>
</feature>